<protein>
    <recommendedName>
        <fullName evidence="3">Exostosin-1</fullName>
        <ecNumber evidence="1">2.4.1.225</ecNumber>
    </recommendedName>
    <alternativeName>
        <fullName evidence="1">N-acetylglucosaminyl-proteoglycan 4-beta-glucuronosyltransferase</fullName>
    </alternativeName>
</protein>
<accession>Q5RBC3</accession>
<organism>
    <name type="scientific">Pongo abelii</name>
    <name type="common">Sumatran orangutan</name>
    <name type="synonym">Pongo pygmaeus abelii</name>
    <dbReference type="NCBI Taxonomy" id="9601"/>
    <lineage>
        <taxon>Eukaryota</taxon>
        <taxon>Metazoa</taxon>
        <taxon>Chordata</taxon>
        <taxon>Craniata</taxon>
        <taxon>Vertebrata</taxon>
        <taxon>Euteleostomi</taxon>
        <taxon>Mammalia</taxon>
        <taxon>Eutheria</taxon>
        <taxon>Euarchontoglires</taxon>
        <taxon>Primates</taxon>
        <taxon>Haplorrhini</taxon>
        <taxon>Catarrhini</taxon>
        <taxon>Hominidae</taxon>
        <taxon>Pongo</taxon>
    </lineage>
</organism>
<name>EXT1_PONAB</name>
<dbReference type="EC" id="2.4.1.225" evidence="1"/>
<dbReference type="EMBL" id="CR858728">
    <property type="protein sequence ID" value="CAH90937.1"/>
    <property type="molecule type" value="mRNA"/>
</dbReference>
<dbReference type="RefSeq" id="NP_001125538.1">
    <property type="nucleotide sequence ID" value="NM_001132066.1"/>
</dbReference>
<dbReference type="SMR" id="Q5RBC3"/>
<dbReference type="STRING" id="9601.ENSPPYP00000021133"/>
<dbReference type="CAZy" id="GT47">
    <property type="family name" value="Glycosyltransferase Family 47"/>
</dbReference>
<dbReference type="CAZy" id="GT64">
    <property type="family name" value="Glycosyltransferase Family 64"/>
</dbReference>
<dbReference type="GlyCosmos" id="Q5RBC3">
    <property type="glycosylation" value="2 sites, No reported glycans"/>
</dbReference>
<dbReference type="GeneID" id="100172450"/>
<dbReference type="KEGG" id="pon:100172450"/>
<dbReference type="CTD" id="2131"/>
<dbReference type="eggNOG" id="KOG1021">
    <property type="taxonomic scope" value="Eukaryota"/>
</dbReference>
<dbReference type="InParanoid" id="Q5RBC3"/>
<dbReference type="OrthoDB" id="5954868at2759"/>
<dbReference type="UniPathway" id="UPA00378"/>
<dbReference type="Proteomes" id="UP000001595">
    <property type="component" value="Unplaced"/>
</dbReference>
<dbReference type="GO" id="GO:1902494">
    <property type="term" value="C:catalytic complex"/>
    <property type="evidence" value="ECO:0000250"/>
    <property type="project" value="UniProtKB"/>
</dbReference>
<dbReference type="GO" id="GO:0005783">
    <property type="term" value="C:endoplasmic reticulum"/>
    <property type="evidence" value="ECO:0000250"/>
    <property type="project" value="UniProtKB"/>
</dbReference>
<dbReference type="GO" id="GO:0005789">
    <property type="term" value="C:endoplasmic reticulum membrane"/>
    <property type="evidence" value="ECO:0007669"/>
    <property type="project" value="UniProtKB-SubCell"/>
</dbReference>
<dbReference type="GO" id="GO:0005794">
    <property type="term" value="C:Golgi apparatus"/>
    <property type="evidence" value="ECO:0000250"/>
    <property type="project" value="UniProtKB"/>
</dbReference>
<dbReference type="GO" id="GO:0000139">
    <property type="term" value="C:Golgi membrane"/>
    <property type="evidence" value="ECO:0007669"/>
    <property type="project" value="UniProtKB-SubCell"/>
</dbReference>
<dbReference type="GO" id="GO:0050508">
    <property type="term" value="F:glucuronosyl-N-acetylglucosaminyl-proteoglycan 4-alpha-N-acetylglucosaminyltransferase activity"/>
    <property type="evidence" value="ECO:0007669"/>
    <property type="project" value="UniProtKB-EC"/>
</dbReference>
<dbReference type="GO" id="GO:0046872">
    <property type="term" value="F:metal ion binding"/>
    <property type="evidence" value="ECO:0007669"/>
    <property type="project" value="UniProtKB-KW"/>
</dbReference>
<dbReference type="GO" id="GO:0050509">
    <property type="term" value="F:N-acetylglucosaminyl-proteoglycan 4-beta-glucuronosyltransferase activity"/>
    <property type="evidence" value="ECO:0000250"/>
    <property type="project" value="UniProtKB"/>
</dbReference>
<dbReference type="GO" id="GO:0015012">
    <property type="term" value="P:heparan sulfate proteoglycan biosynthetic process"/>
    <property type="evidence" value="ECO:0000250"/>
    <property type="project" value="UniProtKB"/>
</dbReference>
<dbReference type="GO" id="GO:0006486">
    <property type="term" value="P:protein glycosylation"/>
    <property type="evidence" value="ECO:0007669"/>
    <property type="project" value="UniProtKB-UniPathway"/>
</dbReference>
<dbReference type="FunFam" id="3.90.550.10:FF:000034">
    <property type="entry name" value="Exostosin 1"/>
    <property type="match status" value="1"/>
</dbReference>
<dbReference type="Gene3D" id="3.90.550.10">
    <property type="entry name" value="Spore Coat Polysaccharide Biosynthesis Protein SpsA, Chain A"/>
    <property type="match status" value="1"/>
</dbReference>
<dbReference type="InterPro" id="IPR004263">
    <property type="entry name" value="Exostosin"/>
</dbReference>
<dbReference type="InterPro" id="IPR040911">
    <property type="entry name" value="Exostosin_GT47"/>
</dbReference>
<dbReference type="InterPro" id="IPR015338">
    <property type="entry name" value="GT64_dom"/>
</dbReference>
<dbReference type="InterPro" id="IPR029044">
    <property type="entry name" value="Nucleotide-diphossugar_trans"/>
</dbReference>
<dbReference type="PANTHER" id="PTHR48261">
    <property type="entry name" value="ACETYLGLUCOSAMINYLTRANSFERASE"/>
    <property type="match status" value="1"/>
</dbReference>
<dbReference type="PANTHER" id="PTHR48261:SF3">
    <property type="entry name" value="EXOSTOSIN GLYCOSYLTRANSFERASE 1"/>
    <property type="match status" value="1"/>
</dbReference>
<dbReference type="Pfam" id="PF03016">
    <property type="entry name" value="Exostosin_GT47"/>
    <property type="match status" value="1"/>
</dbReference>
<dbReference type="Pfam" id="PF09258">
    <property type="entry name" value="Glyco_transf_64"/>
    <property type="match status" value="1"/>
</dbReference>
<dbReference type="SUPFAM" id="SSF53448">
    <property type="entry name" value="Nucleotide-diphospho-sugar transferases"/>
    <property type="match status" value="1"/>
</dbReference>
<sequence length="746" mass="86270">MQAKKRYFILLSAGSCLALLFYFGGLQFRASRSHSRREEHSGRNGLHHPSPDHFWPRFPDALRPFVPWDQLENEDSSVHISPRQKRDANSSIYKGKKCRMESCFDFTLCKKNGFKVYAYPQQKGEKIAESYQNILAAIEGSRFYTSDPSQACLFVLSLDTLDRDQLSPQYVHNLRSKVQSLHLWNNGRNHLIFNLYSGTWPDYTEDVGFDIGQAMLAKASISTENFRPNFDVSIPLFSKDHPRTGGERGFLKFNTIPPLRKYMLVFKGKRYLTGIGSDTRNALYHVHNGEDVVLLTTCKHGKDWQKHKDSRCDRDNTEYEKYDYREMLHNATFCLVPRGRRLGSFRFLEALQAACVPVMLSNGWELPFSEVINWNQAAVIGDERLLLQIPSTIRSIHQDKILALRQQTQFLWEAYFSSVEKIVLTTLEIIQDRIFKHISRNSLIWNKHPGGLFVLPQYSSYLGDFPYYYANLGLKPPSKFTAVIHAVTPLVSQSQPVLKLLVAAAKSQYCAQIIVLWNCDKPLPAKHRWPATAVPVIVIEGESKVMSSRFLPYDNIITDAVLSLDEDTVLSTTEVDFAFTVWRSFPERIVGYPARSHFWDNSKERWGYTSKWTNDYSMVLTGAAIYHKYYHYLYSHYLPASLKNMVDQLANCEDILMNFLVSAVTKLPPIKVTQKEQYKETMMGQTSRASRWADPDHFAQRQSCMNTFASWFGYMPLIHSQMRLDPVLFKDQVSILRKKYRDIERL</sequence>
<reference key="1">
    <citation type="submission" date="2004-11" db="EMBL/GenBank/DDBJ databases">
        <authorList>
            <consortium name="The German cDNA consortium"/>
        </authorList>
    </citation>
    <scope>NUCLEOTIDE SEQUENCE [LARGE SCALE MRNA]</scope>
    <source>
        <tissue>Heart</tissue>
    </source>
</reference>
<gene>
    <name type="primary">EXT1</name>
</gene>
<evidence type="ECO:0000250" key="1">
    <source>
        <dbReference type="UniProtKB" id="Q16394"/>
    </source>
</evidence>
<evidence type="ECO:0000255" key="2"/>
<evidence type="ECO:0000305" key="3"/>
<feature type="chain" id="PRO_0000366931" description="Exostosin-1">
    <location>
        <begin position="1"/>
        <end position="746"/>
    </location>
</feature>
<feature type="topological domain" description="Cytoplasmic" evidence="2">
    <location>
        <begin position="1"/>
        <end position="7"/>
    </location>
</feature>
<feature type="transmembrane region" description="Helical; Signal-anchor for type II membrane protein" evidence="2">
    <location>
        <begin position="8"/>
        <end position="28"/>
    </location>
</feature>
<feature type="topological domain" description="Lumenal" evidence="2">
    <location>
        <begin position="29"/>
        <end position="746"/>
    </location>
</feature>
<feature type="binding site" evidence="1">
    <location>
        <position position="166"/>
    </location>
    <ligand>
        <name>a protein</name>
        <dbReference type="ChEBI" id="CHEBI:16541"/>
    </ligand>
    <ligandPart>
        <name>O(3)-(N-acetyl-alpha-D-glucosaminyl-poly[(1-&gt;4)-beta-D-glucuronosyl-(1-&gt;4)-N-acetyl-alpha-D-glucosaminyl]-(1-&gt;4)-beta-D-glucuronosyl-(1-&gt;3)-beta-D-galactosyl-(1-&gt;3)-beta-D-galactosyl-(1-&gt;4)-beta-D-xylosyl)-L-serine residue</name>
        <dbReference type="ChEBI" id="CHEBI:132416"/>
    </ligandPart>
</feature>
<feature type="binding site" evidence="1">
    <location>
        <position position="203"/>
    </location>
    <ligand>
        <name>a protein</name>
        <dbReference type="ChEBI" id="CHEBI:16541"/>
    </ligand>
    <ligandPart>
        <name>O(3)-(N-acetyl-alpha-D-glucosaminyl-poly[(1-&gt;4)-beta-D-glucuronosyl-(1-&gt;4)-N-acetyl-alpha-D-glucosaminyl]-(1-&gt;4)-beta-D-glucuronosyl-(1-&gt;3)-beta-D-galactosyl-(1-&gt;3)-beta-D-galactosyl-(1-&gt;4)-beta-D-xylosyl)-L-serine residue</name>
        <dbReference type="ChEBI" id="CHEBI:132416"/>
    </ligandPart>
</feature>
<feature type="binding site" evidence="1">
    <location>
        <position position="267"/>
    </location>
    <ligand>
        <name>UDP</name>
        <dbReference type="ChEBI" id="CHEBI:58223"/>
    </ligand>
</feature>
<feature type="binding site" evidence="1">
    <location>
        <position position="269"/>
    </location>
    <ligand>
        <name>UDP</name>
        <dbReference type="ChEBI" id="CHEBI:58223"/>
    </ligand>
</feature>
<feature type="binding site" evidence="1">
    <location>
        <position position="271"/>
    </location>
    <ligand>
        <name>UDP</name>
        <dbReference type="ChEBI" id="CHEBI:58223"/>
    </ligand>
</feature>
<feature type="binding site" evidence="1">
    <location>
        <position position="280"/>
    </location>
    <ligand>
        <name>UDP</name>
        <dbReference type="ChEBI" id="CHEBI:58223"/>
    </ligand>
</feature>
<feature type="binding site" evidence="1">
    <location>
        <position position="300"/>
    </location>
    <ligand>
        <name>a protein</name>
        <dbReference type="ChEBI" id="CHEBI:16541"/>
    </ligand>
    <ligandPart>
        <name>O(3)-(N-acetyl-alpha-D-glucosaminyl-poly[(1-&gt;4)-beta-D-glucuronosyl-(1-&gt;4)-N-acetyl-alpha-D-glucosaminyl]-(1-&gt;4)-beta-D-glucuronosyl-(1-&gt;3)-beta-D-galactosyl-(1-&gt;3)-beta-D-galactosyl-(1-&gt;4)-beta-D-xylosyl)-L-serine residue</name>
        <dbReference type="ChEBI" id="CHEBI:132416"/>
    </ligandPart>
</feature>
<feature type="binding site" evidence="1">
    <location>
        <position position="319"/>
    </location>
    <ligand>
        <name>UDP</name>
        <dbReference type="ChEBI" id="CHEBI:58223"/>
    </ligand>
</feature>
<feature type="binding site" evidence="1">
    <location>
        <position position="324"/>
    </location>
    <ligand>
        <name>UDP</name>
        <dbReference type="ChEBI" id="CHEBI:58223"/>
    </ligand>
</feature>
<feature type="binding site" evidence="1">
    <location>
        <position position="346"/>
    </location>
    <ligand>
        <name>UDP</name>
        <dbReference type="ChEBI" id="CHEBI:58223"/>
    </ligand>
</feature>
<feature type="binding site" evidence="1">
    <location>
        <position position="349"/>
    </location>
    <ligand>
        <name>UDP</name>
        <dbReference type="ChEBI" id="CHEBI:58223"/>
    </ligand>
</feature>
<feature type="glycosylation site" description="N-linked (GlcNAc...) asparagine" evidence="2">
    <location>
        <position position="89"/>
    </location>
</feature>
<feature type="glycosylation site" description="N-linked (GlcNAc...) asparagine" evidence="1">
    <location>
        <position position="330"/>
    </location>
</feature>
<feature type="disulfide bond" evidence="1">
    <location>
        <begin position="98"/>
        <end position="103"/>
    </location>
</feature>
<feature type="disulfide bond" evidence="1">
    <location>
        <begin position="109"/>
        <end position="152"/>
    </location>
</feature>
<feature type="disulfide bond" evidence="1">
    <location>
        <begin position="298"/>
        <end position="312"/>
    </location>
</feature>
<feature type="disulfide bond" evidence="1">
    <location>
        <begin position="334"/>
        <end position="355"/>
    </location>
</feature>
<feature type="disulfide bond" evidence="1">
    <location>
        <begin position="652"/>
        <end position="704"/>
    </location>
</feature>
<keyword id="KW-1015">Disulfide bond</keyword>
<keyword id="KW-0256">Endoplasmic reticulum</keyword>
<keyword id="KW-0325">Glycoprotein</keyword>
<keyword id="KW-0328">Glycosyltransferase</keyword>
<keyword id="KW-0333">Golgi apparatus</keyword>
<keyword id="KW-0464">Manganese</keyword>
<keyword id="KW-0472">Membrane</keyword>
<keyword id="KW-0479">Metal-binding</keyword>
<keyword id="KW-1185">Reference proteome</keyword>
<keyword id="KW-0735">Signal-anchor</keyword>
<keyword id="KW-0808">Transferase</keyword>
<keyword id="KW-0812">Transmembrane</keyword>
<keyword id="KW-1133">Transmembrane helix</keyword>
<proteinExistence type="evidence at transcript level"/>
<comment type="function">
    <text evidence="1">Glycosyltransferase forming with EXT2 the heterodimeric heparan sulfate polymerase which catalyzes the elongation of the heparan sulfate glycan backbone. Glycan backbone extension consists in the alternating transfer of (1-&gt;4)-beta-D-GlcA and (1-&gt;4)-alpha-D-GlcNAc residues from their respective UDP-sugar donors. Both EXT1 and EXT2 are required for the full activity of the polymerase since EXT1 bears the N-acetylglucosaminyl-proteoglycan 4-beta-glucuronosyltransferase activity within the complex while EXT2 carries the glucuronosyl-N-acetylglucosaminyl-proteoglycan 4-alpha-N-acetylglucosaminyltransferase activity. Heparan sulfate proteoglycans are ubiquitous components of the extracellular matrix and play an important role in tissue homeostasis and signaling.</text>
</comment>
<comment type="catalytic activity">
    <reaction evidence="1">
        <text>3-O-{alpha-D-GlcNAc-[(1-&gt;4)-beta-D-GlcA-(1-&gt;4)-alpha-D-GlcNAc](n)-(1-&gt;4)-beta-D-GlcA-(1-&gt;3)-beta-D-Gal-(1-&gt;3)-beta-D-Gal-(1-&gt;4)-beta-D-Xyl}-L-seryl-[protein] + UDP-alpha-D-glucuronate = 3-O-{[(1-&gt;4)-beta-D-GlcA-(1-&gt;4)-alpha-D-GlcNAc](n+1)-(1-&gt;4)-beta-D-GlcA-(1-&gt;3)-beta-D-Gal-(1-&gt;3)-beta-D-Gal-(1-&gt;4)-beta-D-Xyl}-L-seryl-[protein] + UDP + H(+)</text>
        <dbReference type="Rhea" id="RHEA:20908"/>
        <dbReference type="Rhea" id="RHEA-COMP:12623"/>
        <dbReference type="Rhea" id="RHEA-COMP:14295"/>
        <dbReference type="ChEBI" id="CHEBI:15378"/>
        <dbReference type="ChEBI" id="CHEBI:58052"/>
        <dbReference type="ChEBI" id="CHEBI:58223"/>
        <dbReference type="ChEBI" id="CHEBI:132415"/>
        <dbReference type="ChEBI" id="CHEBI:132416"/>
        <dbReference type="EC" id="2.4.1.225"/>
    </reaction>
    <physiologicalReaction direction="left-to-right" evidence="1">
        <dbReference type="Rhea" id="RHEA:20909"/>
    </physiologicalReaction>
</comment>
<comment type="pathway">
    <text evidence="1">Protein modification; protein glycosylation.</text>
</comment>
<comment type="subunit">
    <text evidence="1">Part of the heparan sulfate polymerase, a dimeric complex composed of EXT1 and EXT2. Could also form homooligomeric complexes. Interacts with NDST1.</text>
</comment>
<comment type="subcellular location">
    <subcellularLocation>
        <location evidence="1">Golgi apparatus membrane</location>
        <topology evidence="2">Single-pass type II membrane protein</topology>
    </subcellularLocation>
    <subcellularLocation>
        <location evidence="1">Golgi apparatus</location>
        <location evidence="1">cis-Golgi network membrane</location>
        <topology evidence="2">Single-pass type II membrane protein</topology>
    </subcellularLocation>
    <subcellularLocation>
        <location evidence="1">Endoplasmic reticulum membrane</location>
        <topology evidence="2">Single-pass type II membrane protein</topology>
    </subcellularLocation>
    <text evidence="1">The active heparan sulfate polymerase complex composed of EXT1 and EXT2 is localized to the Golgi apparatus. If both proteins are individually detected in the endoplasmic reticulum, the formation of the complex promotes their transport to the Golgi.</text>
</comment>
<comment type="PTM">
    <text evidence="1">N-glycosylated.</text>
</comment>
<comment type="similarity">
    <text evidence="3">Belongs to the glycosyltransferase 47 family.</text>
</comment>